<proteinExistence type="inferred from homology"/>
<dbReference type="EMBL" id="AL591688">
    <property type="protein sequence ID" value="CAC45981.1"/>
    <property type="molecule type" value="Genomic_DNA"/>
</dbReference>
<dbReference type="RefSeq" id="NP_385508.1">
    <property type="nucleotide sequence ID" value="NC_003047.1"/>
</dbReference>
<dbReference type="RefSeq" id="WP_010969208.1">
    <property type="nucleotide sequence ID" value="NC_003047.1"/>
</dbReference>
<dbReference type="SMR" id="Q92QD0"/>
<dbReference type="EnsemblBacteria" id="CAC45981">
    <property type="protein sequence ID" value="CAC45981"/>
    <property type="gene ID" value="SMc01262"/>
</dbReference>
<dbReference type="KEGG" id="sme:SMc01262"/>
<dbReference type="PATRIC" id="fig|266834.11.peg.2821"/>
<dbReference type="eggNOG" id="COG0242">
    <property type="taxonomic scope" value="Bacteria"/>
</dbReference>
<dbReference type="HOGENOM" id="CLU_061901_2_0_5"/>
<dbReference type="OrthoDB" id="9804313at2"/>
<dbReference type="Proteomes" id="UP000001976">
    <property type="component" value="Chromosome"/>
</dbReference>
<dbReference type="GO" id="GO:0042586">
    <property type="term" value="F:peptide deformylase activity"/>
    <property type="evidence" value="ECO:0007669"/>
    <property type="project" value="UniProtKB-UniRule"/>
</dbReference>
<dbReference type="GO" id="GO:0043686">
    <property type="term" value="P:co-translational protein modification"/>
    <property type="evidence" value="ECO:0007669"/>
    <property type="project" value="TreeGrafter"/>
</dbReference>
<dbReference type="GO" id="GO:0006412">
    <property type="term" value="P:translation"/>
    <property type="evidence" value="ECO:0007669"/>
    <property type="project" value="UniProtKB-UniRule"/>
</dbReference>
<dbReference type="CDD" id="cd00487">
    <property type="entry name" value="Pep_deformylase"/>
    <property type="match status" value="1"/>
</dbReference>
<dbReference type="Gene3D" id="3.90.45.10">
    <property type="entry name" value="Peptide deformylase"/>
    <property type="match status" value="1"/>
</dbReference>
<dbReference type="HAMAP" id="MF_00163">
    <property type="entry name" value="Pep_deformylase"/>
    <property type="match status" value="1"/>
</dbReference>
<dbReference type="InterPro" id="IPR023635">
    <property type="entry name" value="Peptide_deformylase"/>
</dbReference>
<dbReference type="InterPro" id="IPR036821">
    <property type="entry name" value="Peptide_deformylase_sf"/>
</dbReference>
<dbReference type="NCBIfam" id="TIGR00079">
    <property type="entry name" value="pept_deformyl"/>
    <property type="match status" value="1"/>
</dbReference>
<dbReference type="NCBIfam" id="NF001159">
    <property type="entry name" value="PRK00150.1-3"/>
    <property type="match status" value="1"/>
</dbReference>
<dbReference type="NCBIfam" id="NF009484">
    <property type="entry name" value="PRK12846.1-5"/>
    <property type="match status" value="1"/>
</dbReference>
<dbReference type="PANTHER" id="PTHR10458">
    <property type="entry name" value="PEPTIDE DEFORMYLASE"/>
    <property type="match status" value="1"/>
</dbReference>
<dbReference type="PANTHER" id="PTHR10458:SF22">
    <property type="entry name" value="PEPTIDE DEFORMYLASE"/>
    <property type="match status" value="1"/>
</dbReference>
<dbReference type="Pfam" id="PF01327">
    <property type="entry name" value="Pep_deformylase"/>
    <property type="match status" value="1"/>
</dbReference>
<dbReference type="PIRSF" id="PIRSF004749">
    <property type="entry name" value="Pep_def"/>
    <property type="match status" value="1"/>
</dbReference>
<dbReference type="PRINTS" id="PR01576">
    <property type="entry name" value="PDEFORMYLASE"/>
</dbReference>
<dbReference type="SUPFAM" id="SSF56420">
    <property type="entry name" value="Peptide deformylase"/>
    <property type="match status" value="1"/>
</dbReference>
<keyword id="KW-1185">Reference proteome</keyword>
<organism>
    <name type="scientific">Rhizobium meliloti (strain 1021)</name>
    <name type="common">Ensifer meliloti</name>
    <name type="synonym">Sinorhizobium meliloti</name>
    <dbReference type="NCBI Taxonomy" id="266834"/>
    <lineage>
        <taxon>Bacteria</taxon>
        <taxon>Pseudomonadati</taxon>
        <taxon>Pseudomonadota</taxon>
        <taxon>Alphaproteobacteria</taxon>
        <taxon>Hyphomicrobiales</taxon>
        <taxon>Rhizobiaceae</taxon>
        <taxon>Sinorhizobium/Ensifer group</taxon>
        <taxon>Sinorhizobium</taxon>
    </lineage>
</organism>
<gene>
    <name type="ordered locus">R01402</name>
    <name type="ORF">SMc01262</name>
</gene>
<protein>
    <recommendedName>
        <fullName evidence="1">Peptide deformylase-like</fullName>
    </recommendedName>
    <alternativeName>
        <fullName evidence="1">Polypeptide deformylase-like</fullName>
    </alternativeName>
</protein>
<sequence>MAVRPIIRFPSPLLTTSAERIGRFDGTLRQLSDDLVDTMRAAPGIGITASHIGILQRLTVIEVDPQTGPRSFVNPEIVWQSSETAWHTEGSVSMPGVAEEVERPVRVRVSFQTLDGETREEEAEGLMAVCLQHEIDQLNGIFWIRRLSRLKRERAVKRFEKFNRAEAFPGTQ</sequence>
<reference key="1">
    <citation type="journal article" date="2001" name="Proc. Natl. Acad. Sci. U.S.A.">
        <title>Analysis of the chromosome sequence of the legume symbiont Sinorhizobium meliloti strain 1021.</title>
        <authorList>
            <person name="Capela D."/>
            <person name="Barloy-Hubler F."/>
            <person name="Gouzy J."/>
            <person name="Bothe G."/>
            <person name="Ampe F."/>
            <person name="Batut J."/>
            <person name="Boistard P."/>
            <person name="Becker A."/>
            <person name="Boutry M."/>
            <person name="Cadieu E."/>
            <person name="Dreano S."/>
            <person name="Gloux S."/>
            <person name="Godrie T."/>
            <person name="Goffeau A."/>
            <person name="Kahn D."/>
            <person name="Kiss E."/>
            <person name="Lelaure V."/>
            <person name="Masuy D."/>
            <person name="Pohl T."/>
            <person name="Portetelle D."/>
            <person name="Puehler A."/>
            <person name="Purnelle B."/>
            <person name="Ramsperger U."/>
            <person name="Renard C."/>
            <person name="Thebault P."/>
            <person name="Vandenbol M."/>
            <person name="Weidner S."/>
            <person name="Galibert F."/>
        </authorList>
    </citation>
    <scope>NUCLEOTIDE SEQUENCE [LARGE SCALE GENOMIC DNA]</scope>
    <source>
        <strain>1021</strain>
    </source>
</reference>
<reference key="2">
    <citation type="journal article" date="2001" name="Science">
        <title>The composite genome of the legume symbiont Sinorhizobium meliloti.</title>
        <authorList>
            <person name="Galibert F."/>
            <person name="Finan T.M."/>
            <person name="Long S.R."/>
            <person name="Puehler A."/>
            <person name="Abola P."/>
            <person name="Ampe F."/>
            <person name="Barloy-Hubler F."/>
            <person name="Barnett M.J."/>
            <person name="Becker A."/>
            <person name="Boistard P."/>
            <person name="Bothe G."/>
            <person name="Boutry M."/>
            <person name="Bowser L."/>
            <person name="Buhrmester J."/>
            <person name="Cadieu E."/>
            <person name="Capela D."/>
            <person name="Chain P."/>
            <person name="Cowie A."/>
            <person name="Davis R.W."/>
            <person name="Dreano S."/>
            <person name="Federspiel N.A."/>
            <person name="Fisher R.F."/>
            <person name="Gloux S."/>
            <person name="Godrie T."/>
            <person name="Goffeau A."/>
            <person name="Golding B."/>
            <person name="Gouzy J."/>
            <person name="Gurjal M."/>
            <person name="Hernandez-Lucas I."/>
            <person name="Hong A."/>
            <person name="Huizar L."/>
            <person name="Hyman R.W."/>
            <person name="Jones T."/>
            <person name="Kahn D."/>
            <person name="Kahn M.L."/>
            <person name="Kalman S."/>
            <person name="Keating D.H."/>
            <person name="Kiss E."/>
            <person name="Komp C."/>
            <person name="Lelaure V."/>
            <person name="Masuy D."/>
            <person name="Palm C."/>
            <person name="Peck M.C."/>
            <person name="Pohl T.M."/>
            <person name="Portetelle D."/>
            <person name="Purnelle B."/>
            <person name="Ramsperger U."/>
            <person name="Surzycki R."/>
            <person name="Thebault P."/>
            <person name="Vandenbol M."/>
            <person name="Vorhoelter F.J."/>
            <person name="Weidner S."/>
            <person name="Wells D.H."/>
            <person name="Wong K."/>
            <person name="Yeh K.-C."/>
            <person name="Batut J."/>
        </authorList>
    </citation>
    <scope>NUCLEOTIDE SEQUENCE [LARGE SCALE GENOMIC DNA]</scope>
    <source>
        <strain>1021</strain>
    </source>
</reference>
<accession>Q92QD0</accession>
<feature type="chain" id="PRO_0000082894" description="Peptide deformylase-like">
    <location>
        <begin position="1"/>
        <end position="172"/>
    </location>
</feature>
<feature type="active site" evidence="1">
    <location>
        <position position="134"/>
    </location>
</feature>
<comment type="similarity">
    <text evidence="1">Belongs to the polypeptide deformylase family.</text>
</comment>
<name>DEFL_RHIME</name>
<evidence type="ECO:0000255" key="1">
    <source>
        <dbReference type="HAMAP-Rule" id="MF_00163"/>
    </source>
</evidence>